<dbReference type="EC" id="2.7.7.8" evidence="1"/>
<dbReference type="EMBL" id="AE015929">
    <property type="protein sequence ID" value="AAO04548.1"/>
    <property type="molecule type" value="Genomic_DNA"/>
</dbReference>
<dbReference type="RefSeq" id="NP_764506.1">
    <property type="nucleotide sequence ID" value="NC_004461.1"/>
</dbReference>
<dbReference type="RefSeq" id="WP_001832554.1">
    <property type="nucleotide sequence ID" value="NZ_WBME01000001.1"/>
</dbReference>
<dbReference type="PDB" id="5YJJ">
    <property type="method" value="X-ray"/>
    <property type="resolution" value="2.20 A"/>
    <property type="chains" value="A/B/C/D/E/F=1-701"/>
</dbReference>
<dbReference type="PDBsum" id="5YJJ"/>
<dbReference type="SMR" id="Q8CST1"/>
<dbReference type="GeneID" id="50018914"/>
<dbReference type="KEGG" id="sep:SE_0951"/>
<dbReference type="PATRIC" id="fig|176280.10.peg.925"/>
<dbReference type="eggNOG" id="COG1185">
    <property type="taxonomic scope" value="Bacteria"/>
</dbReference>
<dbReference type="HOGENOM" id="CLU_004217_2_2_9"/>
<dbReference type="OrthoDB" id="9804305at2"/>
<dbReference type="BRENDA" id="2.7.7.8">
    <property type="organism ID" value="5875"/>
</dbReference>
<dbReference type="Proteomes" id="UP000001411">
    <property type="component" value="Chromosome"/>
</dbReference>
<dbReference type="GO" id="GO:0005829">
    <property type="term" value="C:cytosol"/>
    <property type="evidence" value="ECO:0007669"/>
    <property type="project" value="TreeGrafter"/>
</dbReference>
<dbReference type="GO" id="GO:0000175">
    <property type="term" value="F:3'-5'-RNA exonuclease activity"/>
    <property type="evidence" value="ECO:0007669"/>
    <property type="project" value="TreeGrafter"/>
</dbReference>
<dbReference type="GO" id="GO:0000287">
    <property type="term" value="F:magnesium ion binding"/>
    <property type="evidence" value="ECO:0007669"/>
    <property type="project" value="UniProtKB-UniRule"/>
</dbReference>
<dbReference type="GO" id="GO:0004654">
    <property type="term" value="F:polyribonucleotide nucleotidyltransferase activity"/>
    <property type="evidence" value="ECO:0007669"/>
    <property type="project" value="UniProtKB-UniRule"/>
</dbReference>
<dbReference type="GO" id="GO:0003723">
    <property type="term" value="F:RNA binding"/>
    <property type="evidence" value="ECO:0007669"/>
    <property type="project" value="UniProtKB-UniRule"/>
</dbReference>
<dbReference type="GO" id="GO:0006402">
    <property type="term" value="P:mRNA catabolic process"/>
    <property type="evidence" value="ECO:0007669"/>
    <property type="project" value="UniProtKB-UniRule"/>
</dbReference>
<dbReference type="GO" id="GO:0006396">
    <property type="term" value="P:RNA processing"/>
    <property type="evidence" value="ECO:0007669"/>
    <property type="project" value="InterPro"/>
</dbReference>
<dbReference type="CDD" id="cd02393">
    <property type="entry name" value="KH-I_PNPase"/>
    <property type="match status" value="1"/>
</dbReference>
<dbReference type="CDD" id="cd11363">
    <property type="entry name" value="RNase_PH_PNPase_1"/>
    <property type="match status" value="1"/>
</dbReference>
<dbReference type="CDD" id="cd11364">
    <property type="entry name" value="RNase_PH_PNPase_2"/>
    <property type="match status" value="1"/>
</dbReference>
<dbReference type="CDD" id="cd04472">
    <property type="entry name" value="S1_PNPase"/>
    <property type="match status" value="1"/>
</dbReference>
<dbReference type="FunFam" id="2.40.50.140:FF:000023">
    <property type="entry name" value="Polyribonucleotide nucleotidyltransferase"/>
    <property type="match status" value="1"/>
</dbReference>
<dbReference type="FunFam" id="3.30.1370.10:FF:000001">
    <property type="entry name" value="Polyribonucleotide nucleotidyltransferase"/>
    <property type="match status" value="1"/>
</dbReference>
<dbReference type="FunFam" id="3.30.230.70:FF:000001">
    <property type="entry name" value="Polyribonucleotide nucleotidyltransferase"/>
    <property type="match status" value="1"/>
</dbReference>
<dbReference type="FunFam" id="3.30.230.70:FF:000002">
    <property type="entry name" value="Polyribonucleotide nucleotidyltransferase"/>
    <property type="match status" value="1"/>
</dbReference>
<dbReference type="Gene3D" id="3.30.230.70">
    <property type="entry name" value="GHMP Kinase, N-terminal domain"/>
    <property type="match status" value="2"/>
</dbReference>
<dbReference type="Gene3D" id="3.30.1370.10">
    <property type="entry name" value="K Homology domain, type 1"/>
    <property type="match status" value="1"/>
</dbReference>
<dbReference type="Gene3D" id="2.40.50.140">
    <property type="entry name" value="Nucleic acid-binding proteins"/>
    <property type="match status" value="1"/>
</dbReference>
<dbReference type="HAMAP" id="MF_01595">
    <property type="entry name" value="PNPase"/>
    <property type="match status" value="1"/>
</dbReference>
<dbReference type="InterPro" id="IPR001247">
    <property type="entry name" value="ExoRNase_PH_dom1"/>
</dbReference>
<dbReference type="InterPro" id="IPR015847">
    <property type="entry name" value="ExoRNase_PH_dom2"/>
</dbReference>
<dbReference type="InterPro" id="IPR036345">
    <property type="entry name" value="ExoRNase_PH_dom2_sf"/>
</dbReference>
<dbReference type="InterPro" id="IPR004087">
    <property type="entry name" value="KH_dom"/>
</dbReference>
<dbReference type="InterPro" id="IPR004088">
    <property type="entry name" value="KH_dom_type_1"/>
</dbReference>
<dbReference type="InterPro" id="IPR036612">
    <property type="entry name" value="KH_dom_type_1_sf"/>
</dbReference>
<dbReference type="InterPro" id="IPR012340">
    <property type="entry name" value="NA-bd_OB-fold"/>
</dbReference>
<dbReference type="InterPro" id="IPR012162">
    <property type="entry name" value="PNPase"/>
</dbReference>
<dbReference type="InterPro" id="IPR027408">
    <property type="entry name" value="PNPase/RNase_PH_dom_sf"/>
</dbReference>
<dbReference type="InterPro" id="IPR015848">
    <property type="entry name" value="PNPase_PH_RNA-bd_bac/org-type"/>
</dbReference>
<dbReference type="InterPro" id="IPR036456">
    <property type="entry name" value="PNPase_PH_RNA-bd_sf"/>
</dbReference>
<dbReference type="InterPro" id="IPR020568">
    <property type="entry name" value="Ribosomal_Su5_D2-typ_SF"/>
</dbReference>
<dbReference type="InterPro" id="IPR003029">
    <property type="entry name" value="S1_domain"/>
</dbReference>
<dbReference type="NCBIfam" id="TIGR03591">
    <property type="entry name" value="polynuc_phos"/>
    <property type="match status" value="1"/>
</dbReference>
<dbReference type="NCBIfam" id="NF008805">
    <property type="entry name" value="PRK11824.1"/>
    <property type="match status" value="1"/>
</dbReference>
<dbReference type="PANTHER" id="PTHR11252">
    <property type="entry name" value="POLYRIBONUCLEOTIDE NUCLEOTIDYLTRANSFERASE"/>
    <property type="match status" value="1"/>
</dbReference>
<dbReference type="PANTHER" id="PTHR11252:SF0">
    <property type="entry name" value="POLYRIBONUCLEOTIDE NUCLEOTIDYLTRANSFERASE 1, MITOCHONDRIAL"/>
    <property type="match status" value="1"/>
</dbReference>
<dbReference type="Pfam" id="PF00013">
    <property type="entry name" value="KH_1"/>
    <property type="match status" value="1"/>
</dbReference>
<dbReference type="Pfam" id="PF03726">
    <property type="entry name" value="PNPase"/>
    <property type="match status" value="1"/>
</dbReference>
<dbReference type="Pfam" id="PF01138">
    <property type="entry name" value="RNase_PH"/>
    <property type="match status" value="2"/>
</dbReference>
<dbReference type="Pfam" id="PF03725">
    <property type="entry name" value="RNase_PH_C"/>
    <property type="match status" value="2"/>
</dbReference>
<dbReference type="Pfam" id="PF00575">
    <property type="entry name" value="S1"/>
    <property type="match status" value="1"/>
</dbReference>
<dbReference type="PIRSF" id="PIRSF005499">
    <property type="entry name" value="PNPase"/>
    <property type="match status" value="1"/>
</dbReference>
<dbReference type="SMART" id="SM00322">
    <property type="entry name" value="KH"/>
    <property type="match status" value="1"/>
</dbReference>
<dbReference type="SMART" id="SM00316">
    <property type="entry name" value="S1"/>
    <property type="match status" value="1"/>
</dbReference>
<dbReference type="SUPFAM" id="SSF54791">
    <property type="entry name" value="Eukaryotic type KH-domain (KH-domain type I)"/>
    <property type="match status" value="1"/>
</dbReference>
<dbReference type="SUPFAM" id="SSF50249">
    <property type="entry name" value="Nucleic acid-binding proteins"/>
    <property type="match status" value="1"/>
</dbReference>
<dbReference type="SUPFAM" id="SSF46915">
    <property type="entry name" value="Polynucleotide phosphorylase/guanosine pentaphosphate synthase (PNPase/GPSI), domain 3"/>
    <property type="match status" value="1"/>
</dbReference>
<dbReference type="SUPFAM" id="SSF55666">
    <property type="entry name" value="Ribonuclease PH domain 2-like"/>
    <property type="match status" value="2"/>
</dbReference>
<dbReference type="SUPFAM" id="SSF54211">
    <property type="entry name" value="Ribosomal protein S5 domain 2-like"/>
    <property type="match status" value="2"/>
</dbReference>
<dbReference type="PROSITE" id="PS50084">
    <property type="entry name" value="KH_TYPE_1"/>
    <property type="match status" value="1"/>
</dbReference>
<dbReference type="PROSITE" id="PS50126">
    <property type="entry name" value="S1"/>
    <property type="match status" value="1"/>
</dbReference>
<sequence length="701" mass="77444">MSQEKKVFKTEWAGRSLTIETGQLAKQANGAVLVRYGDTVVLSTATASKEPRDGDFFPLTVNYEEKMYAAGKIPGGFKKREGRPGDEATLTARLIDRPIRPLFPKGYRHDVQIMNIVLSADPDCSPEMAAMIGSSMALSVSDIPFQGPIAGVNVGYIDGKYVINPSVADKEISRLDLEVAGHKDAVNMVEAGASEITESEMLEAIFFGHEEIKRLVAFQQEIIDHIQPIKQEFVPVERDEDLVEKVKSLTEDKGLKDTVLTFDKQQRDENLDALKEEVVGHFLDEEDPENETLVKEVYAILNDLIKEEVRRLIADEKIRPDGRKVDEIRPLESEVGLLPRAHGSGLFTRGQTQALSVLTLGALGDYQLIDGLGPEVEKRFMHHYNFPNFSVGETGPVRAPGRREIGHGALGERALRYIIPDTQDFPYTIRIVSEVLESNGSSSQASICGSTLALMDAGVPIKAPVAGIAMGLVTRDDSYTILTDIQGMEDALGDMDFKVAGTKDGITAIQMDIKIDGLTREVIEEALEQARQGRLAIMDHMLHTIEQPREELSAYAPKVVTMSINPDKIRDVIGPGGKKINEIIDETGVKLDIEQDGTIFIGAVDQAMINRAKEIIEDITREAEVGQVYHAKVKRIEKYGAFVELFPGKDALLHISQISQERINKVEDVLKIGDTIEVKITEIDKQGRVNASHKVLEQSKN</sequence>
<name>PNP_STAES</name>
<gene>
    <name evidence="1" type="primary">pnp</name>
    <name type="synonym">pnpA</name>
    <name type="ordered locus">SE_0951</name>
</gene>
<keyword id="KW-0002">3D-structure</keyword>
<keyword id="KW-0963">Cytoplasm</keyword>
<keyword id="KW-0460">Magnesium</keyword>
<keyword id="KW-0479">Metal-binding</keyword>
<keyword id="KW-0548">Nucleotidyltransferase</keyword>
<keyword id="KW-0694">RNA-binding</keyword>
<keyword id="KW-0808">Transferase</keyword>
<comment type="function">
    <text evidence="1">Involved in mRNA degradation. Catalyzes the phosphorolysis of single-stranded polyribonucleotides processively in the 3'- to 5'-direction.</text>
</comment>
<comment type="catalytic activity">
    <reaction evidence="1">
        <text>RNA(n+1) + phosphate = RNA(n) + a ribonucleoside 5'-diphosphate</text>
        <dbReference type="Rhea" id="RHEA:22096"/>
        <dbReference type="Rhea" id="RHEA-COMP:14527"/>
        <dbReference type="Rhea" id="RHEA-COMP:17342"/>
        <dbReference type="ChEBI" id="CHEBI:43474"/>
        <dbReference type="ChEBI" id="CHEBI:57930"/>
        <dbReference type="ChEBI" id="CHEBI:140395"/>
        <dbReference type="EC" id="2.7.7.8"/>
    </reaction>
</comment>
<comment type="cofactor">
    <cofactor evidence="1">
        <name>Mg(2+)</name>
        <dbReference type="ChEBI" id="CHEBI:18420"/>
    </cofactor>
</comment>
<comment type="subcellular location">
    <subcellularLocation>
        <location evidence="1">Cytoplasm</location>
    </subcellularLocation>
</comment>
<comment type="similarity">
    <text evidence="1">Belongs to the polyribonucleotide nucleotidyltransferase family.</text>
</comment>
<protein>
    <recommendedName>
        <fullName evidence="1">Polyribonucleotide nucleotidyltransferase</fullName>
        <ecNumber evidence="1">2.7.7.8</ecNumber>
    </recommendedName>
    <alternativeName>
        <fullName evidence="1">Polynucleotide phosphorylase</fullName>
        <shortName evidence="1">PNPase</shortName>
    </alternativeName>
</protein>
<reference key="1">
    <citation type="journal article" date="2003" name="Mol. Microbiol.">
        <title>Genome-based analysis of virulence genes in a non-biofilm-forming Staphylococcus epidermidis strain (ATCC 12228).</title>
        <authorList>
            <person name="Zhang Y.-Q."/>
            <person name="Ren S.-X."/>
            <person name="Li H.-L."/>
            <person name="Wang Y.-X."/>
            <person name="Fu G."/>
            <person name="Yang J."/>
            <person name="Qin Z.-Q."/>
            <person name="Miao Y.-G."/>
            <person name="Wang W.-Y."/>
            <person name="Chen R.-S."/>
            <person name="Shen Y."/>
            <person name="Chen Z."/>
            <person name="Yuan Z.-H."/>
            <person name="Zhao G.-P."/>
            <person name="Qu D."/>
            <person name="Danchin A."/>
            <person name="Wen Y.-M."/>
        </authorList>
    </citation>
    <scope>NUCLEOTIDE SEQUENCE [LARGE SCALE GENOMIC DNA]</scope>
    <source>
        <strain>ATCC 12228 / FDA PCI 1200</strain>
    </source>
</reference>
<feature type="chain" id="PRO_0000260062" description="Polyribonucleotide nucleotidyltransferase">
    <location>
        <begin position="1"/>
        <end position="701"/>
    </location>
</feature>
<feature type="domain" description="KH" evidence="1">
    <location>
        <begin position="557"/>
        <end position="616"/>
    </location>
</feature>
<feature type="domain" description="S1 motif" evidence="1">
    <location>
        <begin position="626"/>
        <end position="694"/>
    </location>
</feature>
<feature type="binding site" evidence="1">
    <location>
        <position position="490"/>
    </location>
    <ligand>
        <name>Mg(2+)</name>
        <dbReference type="ChEBI" id="CHEBI:18420"/>
    </ligand>
</feature>
<feature type="binding site" evidence="1">
    <location>
        <position position="496"/>
    </location>
    <ligand>
        <name>Mg(2+)</name>
        <dbReference type="ChEBI" id="CHEBI:18420"/>
    </ligand>
</feature>
<feature type="strand" evidence="2">
    <location>
        <begin position="6"/>
        <end position="12"/>
    </location>
</feature>
<feature type="strand" evidence="2">
    <location>
        <begin position="15"/>
        <end position="24"/>
    </location>
</feature>
<feature type="strand" evidence="2">
    <location>
        <begin position="28"/>
        <end position="36"/>
    </location>
</feature>
<feature type="strand" evidence="2">
    <location>
        <begin position="39"/>
        <end position="47"/>
    </location>
</feature>
<feature type="strand" evidence="2">
    <location>
        <begin position="59"/>
        <end position="65"/>
    </location>
</feature>
<feature type="helix" evidence="2">
    <location>
        <begin position="67"/>
        <end position="69"/>
    </location>
</feature>
<feature type="helix" evidence="2">
    <location>
        <begin position="87"/>
        <end position="99"/>
    </location>
</feature>
<feature type="strand" evidence="2">
    <location>
        <begin position="111"/>
        <end position="119"/>
    </location>
</feature>
<feature type="helix" evidence="2">
    <location>
        <begin position="126"/>
        <end position="139"/>
    </location>
</feature>
<feature type="strand" evidence="2">
    <location>
        <begin position="141"/>
        <end position="143"/>
    </location>
</feature>
<feature type="strand" evidence="2">
    <location>
        <begin position="150"/>
        <end position="157"/>
    </location>
</feature>
<feature type="strand" evidence="2">
    <location>
        <begin position="160"/>
        <end position="164"/>
    </location>
</feature>
<feature type="helix" evidence="2">
    <location>
        <begin position="167"/>
        <end position="171"/>
    </location>
</feature>
<feature type="strand" evidence="2">
    <location>
        <begin position="174"/>
        <end position="181"/>
    </location>
</feature>
<feature type="strand" evidence="2">
    <location>
        <begin position="183"/>
        <end position="196"/>
    </location>
</feature>
<feature type="helix" evidence="2">
    <location>
        <begin position="198"/>
        <end position="226"/>
    </location>
</feature>
<feature type="helix" evidence="2">
    <location>
        <begin position="298"/>
        <end position="314"/>
    </location>
</feature>
<feature type="strand" evidence="2">
    <location>
        <begin position="331"/>
        <end position="335"/>
    </location>
</feature>
<feature type="strand" evidence="2">
    <location>
        <begin position="341"/>
        <end position="349"/>
    </location>
</feature>
<feature type="strand" evidence="2">
    <location>
        <begin position="352"/>
        <end position="361"/>
    </location>
</feature>
<feature type="strand" evidence="2">
    <location>
        <begin position="380"/>
        <end position="385"/>
    </location>
</feature>
<feature type="helix" evidence="2">
    <location>
        <begin position="388"/>
        <end position="391"/>
    </location>
</feature>
<feature type="helix" evidence="2">
    <location>
        <begin position="402"/>
        <end position="416"/>
    </location>
</feature>
<feature type="turn" evidence="2">
    <location>
        <begin position="422"/>
        <end position="424"/>
    </location>
</feature>
<feature type="strand" evidence="2">
    <location>
        <begin position="427"/>
        <end position="437"/>
    </location>
</feature>
<feature type="helix" evidence="2">
    <location>
        <begin position="442"/>
        <end position="456"/>
    </location>
</feature>
<feature type="strand" evidence="2">
    <location>
        <begin position="466"/>
        <end position="475"/>
    </location>
</feature>
<feature type="strand" evidence="2">
    <location>
        <begin position="478"/>
        <end position="484"/>
    </location>
</feature>
<feature type="helix" evidence="2">
    <location>
        <begin position="487"/>
        <end position="492"/>
    </location>
</feature>
<feature type="strand" evidence="2">
    <location>
        <begin position="493"/>
        <end position="502"/>
    </location>
</feature>
<feature type="strand" evidence="2">
    <location>
        <begin position="505"/>
        <end position="516"/>
    </location>
</feature>
<feature type="helix" evidence="2">
    <location>
        <begin position="520"/>
        <end position="544"/>
    </location>
</feature>
<evidence type="ECO:0000255" key="1">
    <source>
        <dbReference type="HAMAP-Rule" id="MF_01595"/>
    </source>
</evidence>
<evidence type="ECO:0007829" key="2">
    <source>
        <dbReference type="PDB" id="5YJJ"/>
    </source>
</evidence>
<organism>
    <name type="scientific">Staphylococcus epidermidis (strain ATCC 12228 / FDA PCI 1200)</name>
    <dbReference type="NCBI Taxonomy" id="176280"/>
    <lineage>
        <taxon>Bacteria</taxon>
        <taxon>Bacillati</taxon>
        <taxon>Bacillota</taxon>
        <taxon>Bacilli</taxon>
        <taxon>Bacillales</taxon>
        <taxon>Staphylococcaceae</taxon>
        <taxon>Staphylococcus</taxon>
    </lineage>
</organism>
<accession>Q8CST1</accession>
<proteinExistence type="evidence at protein level"/>